<accession>Q1XDB5</accession>
<sequence length="216" mass="24143">MRTRYKNTYKEFLGACFLGSVTLLSISLWNIINQAGKNHSYKAFIEFDSAYGIQEGTAVRLRGLPVGKVVGISQSSNSILTSIEIKSSSTIIPKTSLIETNQTGLLNDTVIDIIPLSKLSIDYSSIKAGPLSGACDNSQIICNLNYLKGERGLNYDDLIRATTRISQRFDDPKLFYGLYYLIGNMIKLSNNFVDLTEQIAYMSLFIRLQLENLKEQ</sequence>
<proteinExistence type="predicted"/>
<feature type="chain" id="PRO_0000277270" description="Uncharacterized protein ycf22">
    <location>
        <begin position="1"/>
        <end position="216"/>
    </location>
</feature>
<comment type="subcellular location">
    <subcellularLocation>
        <location>Plastid</location>
        <location>Chloroplast</location>
    </subcellularLocation>
</comment>
<dbReference type="EMBL" id="AP006715">
    <property type="protein sequence ID" value="BAE92496.1"/>
    <property type="molecule type" value="Genomic_DNA"/>
</dbReference>
<dbReference type="RefSeq" id="YP_537053.1">
    <property type="nucleotide sequence ID" value="NC_007932.1"/>
</dbReference>
<dbReference type="SMR" id="Q1XDB5"/>
<dbReference type="GO" id="GO:0009706">
    <property type="term" value="C:chloroplast inner membrane"/>
    <property type="evidence" value="ECO:0007669"/>
    <property type="project" value="TreeGrafter"/>
</dbReference>
<dbReference type="GO" id="GO:0005319">
    <property type="term" value="F:lipid transporter activity"/>
    <property type="evidence" value="ECO:0007669"/>
    <property type="project" value="TreeGrafter"/>
</dbReference>
<dbReference type="GO" id="GO:0005543">
    <property type="term" value="F:phospholipid binding"/>
    <property type="evidence" value="ECO:0007669"/>
    <property type="project" value="TreeGrafter"/>
</dbReference>
<dbReference type="InterPro" id="IPR003399">
    <property type="entry name" value="Mce/MlaD"/>
</dbReference>
<dbReference type="InterPro" id="IPR039342">
    <property type="entry name" value="TGD2-like"/>
</dbReference>
<dbReference type="PANTHER" id="PTHR34675">
    <property type="entry name" value="PROTEIN TRIGALACTOSYLDIACYLGLYCEROL 2, CHLOROPLASTIC"/>
    <property type="match status" value="1"/>
</dbReference>
<dbReference type="PANTHER" id="PTHR34675:SF1">
    <property type="entry name" value="PROTEIN TRIGALACTOSYLDIACYLGLYCEROL 2, CHLOROPLASTIC"/>
    <property type="match status" value="1"/>
</dbReference>
<dbReference type="Pfam" id="PF02470">
    <property type="entry name" value="MlaD"/>
    <property type="match status" value="1"/>
</dbReference>
<name>YCF22_PYRYE</name>
<protein>
    <recommendedName>
        <fullName>Uncharacterized protein ycf22</fullName>
    </recommendedName>
</protein>
<gene>
    <name type="primary">ycf22</name>
</gene>
<reference key="1">
    <citation type="submission" date="2003-11" db="EMBL/GenBank/DDBJ databases">
        <title>Whole genome sequence of Porphyra yezoensis chloroplast.</title>
        <authorList>
            <person name="Kunimoto M."/>
            <person name="Morishima K."/>
            <person name="Yoshikawa M."/>
            <person name="Fukuda S."/>
            <person name="Kobayashi T."/>
            <person name="Kobayashi M."/>
            <person name="Okazaki T."/>
            <person name="Ohara I."/>
            <person name="Nakayama I."/>
        </authorList>
    </citation>
    <scope>NUCLEOTIDE SEQUENCE [LARGE SCALE GENOMIC DNA]</scope>
    <source>
        <strain>U-51</strain>
    </source>
</reference>
<organism>
    <name type="scientific">Pyropia yezoensis</name>
    <name type="common">Susabi-nori</name>
    <name type="synonym">Porphyra yezoensis</name>
    <dbReference type="NCBI Taxonomy" id="2788"/>
    <lineage>
        <taxon>Eukaryota</taxon>
        <taxon>Rhodophyta</taxon>
        <taxon>Bangiophyceae</taxon>
        <taxon>Bangiales</taxon>
        <taxon>Bangiaceae</taxon>
        <taxon>Pyropia</taxon>
    </lineage>
</organism>
<keyword id="KW-0150">Chloroplast</keyword>
<keyword id="KW-0934">Plastid</keyword>
<geneLocation type="chloroplast"/>